<reference key="1">
    <citation type="journal article" date="2006" name="Proc. Natl. Acad. Sci. U.S.A.">
        <title>The complete genome sequence of a chronic atrophic gastritis Helicobacter pylori strain: evolution during disease progression.</title>
        <authorList>
            <person name="Oh J.D."/>
            <person name="Kling-Baeckhed H."/>
            <person name="Giannakis M."/>
            <person name="Xu J."/>
            <person name="Fulton R.S."/>
            <person name="Fulton L.A."/>
            <person name="Cordum H.S."/>
            <person name="Wang C."/>
            <person name="Elliott G."/>
            <person name="Edwards J."/>
            <person name="Mardis E.R."/>
            <person name="Engstrand L.G."/>
            <person name="Gordon J.I."/>
        </authorList>
    </citation>
    <scope>NUCLEOTIDE SEQUENCE [LARGE SCALE GENOMIC DNA]</scope>
    <source>
        <strain>HPAG1</strain>
    </source>
</reference>
<accession>Q1CUR3</accession>
<sequence>MELETHLSKYFTLAFTHKSMSLEMREKLAINSSATLKEFLQTIKNHCPNIKECMVLSTCNRFEIYASLRHGAHANEQKSALLKILAQNKKMSVSDLEKCVLMNTDESAVHHVFSVCSSLDSLVVGETQITGQMKNAYKFAFEEKFCSKDLTRLLHFAFKCAAKVRNLTGISKQGVSISSVAVKEALNIFEKERIKDKKALVIGLGEMAQLVIKHLLNKQFEALILGRNAAKFEDFIKELEEPKKVSFQNIENLNAYINEYELLFCATSSPHFIVQNSMLKETIFRRFWFDLAVPRNIEKPVLDNIFLYSVDDLEPMVKENVGNRQESRTKAYEIVGLATMEFYQWIQSLEVEPLIKDLRELARISAQKELQKALKKRYVPKEYESNIEKILHNAFNTFLHHPTIALKKNAQKEESDVLVGAIKNLFNLDKSNANHAQNLNLYKCEYYEE</sequence>
<feature type="chain" id="PRO_1000004627" description="Glutamyl-tRNA reductase">
    <location>
        <begin position="1"/>
        <end position="449"/>
    </location>
</feature>
<feature type="active site" description="Nucleophile" evidence="1">
    <location>
        <position position="59"/>
    </location>
</feature>
<feature type="binding site" evidence="1">
    <location>
        <begin position="58"/>
        <end position="61"/>
    </location>
    <ligand>
        <name>substrate</name>
    </ligand>
</feature>
<feature type="binding site" evidence="1">
    <location>
        <position position="121"/>
    </location>
    <ligand>
        <name>substrate</name>
    </ligand>
</feature>
<feature type="binding site" evidence="1">
    <location>
        <begin position="126"/>
        <end position="128"/>
    </location>
    <ligand>
        <name>substrate</name>
    </ligand>
</feature>
<feature type="binding site" evidence="1">
    <location>
        <position position="132"/>
    </location>
    <ligand>
        <name>substrate</name>
    </ligand>
</feature>
<feature type="binding site" evidence="1">
    <location>
        <begin position="203"/>
        <end position="208"/>
    </location>
    <ligand>
        <name>NADP(+)</name>
        <dbReference type="ChEBI" id="CHEBI:58349"/>
    </ligand>
</feature>
<feature type="site" description="Important for activity" evidence="1">
    <location>
        <position position="111"/>
    </location>
</feature>
<protein>
    <recommendedName>
        <fullName evidence="1">Glutamyl-tRNA reductase</fullName>
        <shortName evidence="1">GluTR</shortName>
        <ecNumber evidence="1">1.2.1.70</ecNumber>
    </recommendedName>
</protein>
<proteinExistence type="inferred from homology"/>
<organism>
    <name type="scientific">Helicobacter pylori (strain HPAG1)</name>
    <dbReference type="NCBI Taxonomy" id="357544"/>
    <lineage>
        <taxon>Bacteria</taxon>
        <taxon>Pseudomonadati</taxon>
        <taxon>Campylobacterota</taxon>
        <taxon>Epsilonproteobacteria</taxon>
        <taxon>Campylobacterales</taxon>
        <taxon>Helicobacteraceae</taxon>
        <taxon>Helicobacter</taxon>
    </lineage>
</organism>
<gene>
    <name evidence="1" type="primary">hemA</name>
    <name type="ordered locus">HPAG1_0242</name>
</gene>
<dbReference type="EC" id="1.2.1.70" evidence="1"/>
<dbReference type="EMBL" id="CP000241">
    <property type="protein sequence ID" value="ABF84309.1"/>
    <property type="molecule type" value="Genomic_DNA"/>
</dbReference>
<dbReference type="RefSeq" id="WP_000418374.1">
    <property type="nucleotide sequence ID" value="NC_008086.1"/>
</dbReference>
<dbReference type="SMR" id="Q1CUR3"/>
<dbReference type="KEGG" id="hpa:HPAG1_0242"/>
<dbReference type="HOGENOM" id="CLU_035113_2_2_7"/>
<dbReference type="UniPathway" id="UPA00251">
    <property type="reaction ID" value="UER00316"/>
</dbReference>
<dbReference type="GO" id="GO:0008883">
    <property type="term" value="F:glutamyl-tRNA reductase activity"/>
    <property type="evidence" value="ECO:0007669"/>
    <property type="project" value="UniProtKB-UniRule"/>
</dbReference>
<dbReference type="GO" id="GO:0050661">
    <property type="term" value="F:NADP binding"/>
    <property type="evidence" value="ECO:0007669"/>
    <property type="project" value="InterPro"/>
</dbReference>
<dbReference type="GO" id="GO:0006782">
    <property type="term" value="P:protoporphyrinogen IX biosynthetic process"/>
    <property type="evidence" value="ECO:0007669"/>
    <property type="project" value="UniProtKB-UniRule"/>
</dbReference>
<dbReference type="CDD" id="cd05213">
    <property type="entry name" value="NAD_bind_Glutamyl_tRNA_reduct"/>
    <property type="match status" value="1"/>
</dbReference>
<dbReference type="FunFam" id="3.30.460.30:FF:000001">
    <property type="entry name" value="Glutamyl-tRNA reductase"/>
    <property type="match status" value="1"/>
</dbReference>
<dbReference type="Gene3D" id="3.30.460.30">
    <property type="entry name" value="Glutamyl-tRNA reductase, N-terminal domain"/>
    <property type="match status" value="1"/>
</dbReference>
<dbReference type="Gene3D" id="3.40.50.720">
    <property type="entry name" value="NAD(P)-binding Rossmann-like Domain"/>
    <property type="match status" value="1"/>
</dbReference>
<dbReference type="HAMAP" id="MF_00087">
    <property type="entry name" value="Glu_tRNA_reductase"/>
    <property type="match status" value="1"/>
</dbReference>
<dbReference type="InterPro" id="IPR000343">
    <property type="entry name" value="4pyrrol_synth_GluRdtase"/>
</dbReference>
<dbReference type="InterPro" id="IPR015896">
    <property type="entry name" value="4pyrrol_synth_GluRdtase_dimer"/>
</dbReference>
<dbReference type="InterPro" id="IPR015895">
    <property type="entry name" value="4pyrrol_synth_GluRdtase_N"/>
</dbReference>
<dbReference type="InterPro" id="IPR018214">
    <property type="entry name" value="GluRdtase_CS"/>
</dbReference>
<dbReference type="InterPro" id="IPR036453">
    <property type="entry name" value="GluRdtase_dimer_dom_sf"/>
</dbReference>
<dbReference type="InterPro" id="IPR036343">
    <property type="entry name" value="GluRdtase_N_sf"/>
</dbReference>
<dbReference type="InterPro" id="IPR036291">
    <property type="entry name" value="NAD(P)-bd_dom_sf"/>
</dbReference>
<dbReference type="InterPro" id="IPR006151">
    <property type="entry name" value="Shikm_DH/Glu-tRNA_Rdtase"/>
</dbReference>
<dbReference type="NCBIfam" id="TIGR01035">
    <property type="entry name" value="hemA"/>
    <property type="match status" value="1"/>
</dbReference>
<dbReference type="PANTHER" id="PTHR43120">
    <property type="entry name" value="GLUTAMYL-TRNA REDUCTASE 1, CHLOROPLASTIC"/>
    <property type="match status" value="1"/>
</dbReference>
<dbReference type="PANTHER" id="PTHR43120:SF1">
    <property type="entry name" value="GLUTAMYL-TRNA REDUCTASE 1, CHLOROPLASTIC"/>
    <property type="match status" value="1"/>
</dbReference>
<dbReference type="Pfam" id="PF00745">
    <property type="entry name" value="GlutR_dimer"/>
    <property type="match status" value="1"/>
</dbReference>
<dbReference type="Pfam" id="PF05201">
    <property type="entry name" value="GlutR_N"/>
    <property type="match status" value="1"/>
</dbReference>
<dbReference type="Pfam" id="PF01488">
    <property type="entry name" value="Shikimate_DH"/>
    <property type="match status" value="1"/>
</dbReference>
<dbReference type="PIRSF" id="PIRSF000445">
    <property type="entry name" value="4pyrrol_synth_GluRdtase"/>
    <property type="match status" value="1"/>
</dbReference>
<dbReference type="SUPFAM" id="SSF69742">
    <property type="entry name" value="Glutamyl tRNA-reductase catalytic, N-terminal domain"/>
    <property type="match status" value="1"/>
</dbReference>
<dbReference type="SUPFAM" id="SSF69075">
    <property type="entry name" value="Glutamyl tRNA-reductase dimerization domain"/>
    <property type="match status" value="1"/>
</dbReference>
<dbReference type="SUPFAM" id="SSF51735">
    <property type="entry name" value="NAD(P)-binding Rossmann-fold domains"/>
    <property type="match status" value="1"/>
</dbReference>
<dbReference type="PROSITE" id="PS00747">
    <property type="entry name" value="GLUTR"/>
    <property type="match status" value="1"/>
</dbReference>
<keyword id="KW-0521">NADP</keyword>
<keyword id="KW-0560">Oxidoreductase</keyword>
<keyword id="KW-0627">Porphyrin biosynthesis</keyword>
<evidence type="ECO:0000255" key="1">
    <source>
        <dbReference type="HAMAP-Rule" id="MF_00087"/>
    </source>
</evidence>
<name>HEM1_HELPH</name>
<comment type="function">
    <text evidence="1">Catalyzes the NADPH-dependent reduction of glutamyl-tRNA(Glu) to glutamate 1-semialdehyde (GSA).</text>
</comment>
<comment type="catalytic activity">
    <reaction evidence="1">
        <text>(S)-4-amino-5-oxopentanoate + tRNA(Glu) + NADP(+) = L-glutamyl-tRNA(Glu) + NADPH + H(+)</text>
        <dbReference type="Rhea" id="RHEA:12344"/>
        <dbReference type="Rhea" id="RHEA-COMP:9663"/>
        <dbReference type="Rhea" id="RHEA-COMP:9680"/>
        <dbReference type="ChEBI" id="CHEBI:15378"/>
        <dbReference type="ChEBI" id="CHEBI:57501"/>
        <dbReference type="ChEBI" id="CHEBI:57783"/>
        <dbReference type="ChEBI" id="CHEBI:58349"/>
        <dbReference type="ChEBI" id="CHEBI:78442"/>
        <dbReference type="ChEBI" id="CHEBI:78520"/>
        <dbReference type="EC" id="1.2.1.70"/>
    </reaction>
</comment>
<comment type="pathway">
    <text evidence="1">Porphyrin-containing compound metabolism; protoporphyrin-IX biosynthesis; 5-aminolevulinate from L-glutamyl-tRNA(Glu): step 1/2.</text>
</comment>
<comment type="subunit">
    <text evidence="1">Homodimer.</text>
</comment>
<comment type="domain">
    <text evidence="1">Possesses an unusual extended V-shaped dimeric structure with each monomer consisting of three distinct domains arranged along a curved 'spinal' alpha-helix. The N-terminal catalytic domain specifically recognizes the glutamate moiety of the substrate. The second domain is the NADPH-binding domain, and the third C-terminal domain is responsible for dimerization.</text>
</comment>
<comment type="miscellaneous">
    <text evidence="1">During catalysis, the active site Cys acts as a nucleophile attacking the alpha-carbonyl group of tRNA-bound glutamate with the formation of a thioester intermediate between enzyme and glutamate, and the concomitant release of tRNA(Glu). The thioester intermediate is finally reduced by direct hydride transfer from NADPH, to form the product GSA.</text>
</comment>
<comment type="similarity">
    <text evidence="1">Belongs to the glutamyl-tRNA reductase family.</text>
</comment>